<evidence type="ECO:0000255" key="1">
    <source>
        <dbReference type="HAMAP-Rule" id="MF_00101"/>
    </source>
</evidence>
<accession>Q03DZ1</accession>
<feature type="chain" id="PRO_1000008470" description="Holo-[acyl-carrier-protein] synthase">
    <location>
        <begin position="1"/>
        <end position="118"/>
    </location>
</feature>
<feature type="binding site" evidence="1">
    <location>
        <position position="8"/>
    </location>
    <ligand>
        <name>Mg(2+)</name>
        <dbReference type="ChEBI" id="CHEBI:18420"/>
    </ligand>
</feature>
<feature type="binding site" evidence="1">
    <location>
        <position position="57"/>
    </location>
    <ligand>
        <name>Mg(2+)</name>
        <dbReference type="ChEBI" id="CHEBI:18420"/>
    </ligand>
</feature>
<comment type="function">
    <text evidence="1">Transfers the 4'-phosphopantetheine moiety from coenzyme A to a Ser of acyl-carrier-protein.</text>
</comment>
<comment type="catalytic activity">
    <reaction evidence="1">
        <text>apo-[ACP] + CoA = holo-[ACP] + adenosine 3',5'-bisphosphate + H(+)</text>
        <dbReference type="Rhea" id="RHEA:12068"/>
        <dbReference type="Rhea" id="RHEA-COMP:9685"/>
        <dbReference type="Rhea" id="RHEA-COMP:9690"/>
        <dbReference type="ChEBI" id="CHEBI:15378"/>
        <dbReference type="ChEBI" id="CHEBI:29999"/>
        <dbReference type="ChEBI" id="CHEBI:57287"/>
        <dbReference type="ChEBI" id="CHEBI:58343"/>
        <dbReference type="ChEBI" id="CHEBI:64479"/>
        <dbReference type="EC" id="2.7.8.7"/>
    </reaction>
</comment>
<comment type="cofactor">
    <cofactor evidence="1">
        <name>Mg(2+)</name>
        <dbReference type="ChEBI" id="CHEBI:18420"/>
    </cofactor>
</comment>
<comment type="subcellular location">
    <subcellularLocation>
        <location evidence="1">Cytoplasm</location>
    </subcellularLocation>
</comment>
<comment type="similarity">
    <text evidence="1">Belongs to the P-Pant transferase superfamily. AcpS family.</text>
</comment>
<protein>
    <recommendedName>
        <fullName evidence="1">Holo-[acyl-carrier-protein] synthase</fullName>
        <shortName evidence="1">Holo-ACP synthase</shortName>
        <ecNumber evidence="1">2.7.8.7</ecNumber>
    </recommendedName>
    <alternativeName>
        <fullName evidence="1">4'-phosphopantetheinyl transferase AcpS</fullName>
    </alternativeName>
</protein>
<dbReference type="EC" id="2.7.8.7" evidence="1"/>
<dbReference type="EMBL" id="CP000422">
    <property type="protein sequence ID" value="ABJ68581.1"/>
    <property type="molecule type" value="Genomic_DNA"/>
</dbReference>
<dbReference type="RefSeq" id="WP_002833014.1">
    <property type="nucleotide sequence ID" value="NC_008525.1"/>
</dbReference>
<dbReference type="SMR" id="Q03DZ1"/>
<dbReference type="STRING" id="278197.PEPE_1560"/>
<dbReference type="GeneID" id="33061975"/>
<dbReference type="KEGG" id="ppe:PEPE_1560"/>
<dbReference type="eggNOG" id="COG0736">
    <property type="taxonomic scope" value="Bacteria"/>
</dbReference>
<dbReference type="HOGENOM" id="CLU_089696_1_2_9"/>
<dbReference type="OrthoDB" id="517356at2"/>
<dbReference type="Proteomes" id="UP000000773">
    <property type="component" value="Chromosome"/>
</dbReference>
<dbReference type="GO" id="GO:0005829">
    <property type="term" value="C:cytosol"/>
    <property type="evidence" value="ECO:0007669"/>
    <property type="project" value="TreeGrafter"/>
</dbReference>
<dbReference type="GO" id="GO:0008897">
    <property type="term" value="F:holo-[acyl-carrier-protein] synthase activity"/>
    <property type="evidence" value="ECO:0007669"/>
    <property type="project" value="UniProtKB-UniRule"/>
</dbReference>
<dbReference type="GO" id="GO:0000287">
    <property type="term" value="F:magnesium ion binding"/>
    <property type="evidence" value="ECO:0007669"/>
    <property type="project" value="UniProtKB-UniRule"/>
</dbReference>
<dbReference type="GO" id="GO:0006633">
    <property type="term" value="P:fatty acid biosynthetic process"/>
    <property type="evidence" value="ECO:0007669"/>
    <property type="project" value="UniProtKB-UniRule"/>
</dbReference>
<dbReference type="GO" id="GO:0019878">
    <property type="term" value="P:lysine biosynthetic process via aminoadipic acid"/>
    <property type="evidence" value="ECO:0007669"/>
    <property type="project" value="TreeGrafter"/>
</dbReference>
<dbReference type="Gene3D" id="3.90.470.20">
    <property type="entry name" value="4'-phosphopantetheinyl transferase domain"/>
    <property type="match status" value="1"/>
</dbReference>
<dbReference type="HAMAP" id="MF_00101">
    <property type="entry name" value="AcpS"/>
    <property type="match status" value="1"/>
</dbReference>
<dbReference type="InterPro" id="IPR008278">
    <property type="entry name" value="4-PPantetheinyl_Trfase_dom"/>
</dbReference>
<dbReference type="InterPro" id="IPR037143">
    <property type="entry name" value="4-PPantetheinyl_Trfase_dom_sf"/>
</dbReference>
<dbReference type="InterPro" id="IPR002582">
    <property type="entry name" value="ACPS"/>
</dbReference>
<dbReference type="InterPro" id="IPR050559">
    <property type="entry name" value="P-Pant_transferase_sf"/>
</dbReference>
<dbReference type="InterPro" id="IPR004568">
    <property type="entry name" value="Ppantetheine-prot_Trfase_dom"/>
</dbReference>
<dbReference type="NCBIfam" id="TIGR00516">
    <property type="entry name" value="acpS"/>
    <property type="match status" value="1"/>
</dbReference>
<dbReference type="NCBIfam" id="TIGR00556">
    <property type="entry name" value="pantethn_trn"/>
    <property type="match status" value="1"/>
</dbReference>
<dbReference type="PANTHER" id="PTHR12215:SF10">
    <property type="entry name" value="L-AMINOADIPATE-SEMIALDEHYDE DEHYDROGENASE-PHOSPHOPANTETHEINYL TRANSFERASE"/>
    <property type="match status" value="1"/>
</dbReference>
<dbReference type="PANTHER" id="PTHR12215">
    <property type="entry name" value="PHOSPHOPANTETHEINE TRANSFERASE"/>
    <property type="match status" value="1"/>
</dbReference>
<dbReference type="Pfam" id="PF01648">
    <property type="entry name" value="ACPS"/>
    <property type="match status" value="1"/>
</dbReference>
<dbReference type="SUPFAM" id="SSF56214">
    <property type="entry name" value="4'-phosphopantetheinyl transferase"/>
    <property type="match status" value="1"/>
</dbReference>
<organism>
    <name type="scientific">Pediococcus pentosaceus (strain ATCC 25745 / CCUG 21536 / LMG 10740 / 183-1w)</name>
    <dbReference type="NCBI Taxonomy" id="278197"/>
    <lineage>
        <taxon>Bacteria</taxon>
        <taxon>Bacillati</taxon>
        <taxon>Bacillota</taxon>
        <taxon>Bacilli</taxon>
        <taxon>Lactobacillales</taxon>
        <taxon>Lactobacillaceae</taxon>
        <taxon>Pediococcus</taxon>
    </lineage>
</organism>
<sequence>MIYGIGIDITNIDRFKTLHNPATFIQKVLTPTEFDEFEAKKGQRAYEFLAGHFSVKESYSKAYGTGLGKKLNFQDIEINYDGVGKPKIVKHPFSGTVHVSISHSDHHVVTQVILEGDN</sequence>
<reference key="1">
    <citation type="journal article" date="2006" name="Proc. Natl. Acad. Sci. U.S.A.">
        <title>Comparative genomics of the lactic acid bacteria.</title>
        <authorList>
            <person name="Makarova K.S."/>
            <person name="Slesarev A."/>
            <person name="Wolf Y.I."/>
            <person name="Sorokin A."/>
            <person name="Mirkin B."/>
            <person name="Koonin E.V."/>
            <person name="Pavlov A."/>
            <person name="Pavlova N."/>
            <person name="Karamychev V."/>
            <person name="Polouchine N."/>
            <person name="Shakhova V."/>
            <person name="Grigoriev I."/>
            <person name="Lou Y."/>
            <person name="Rohksar D."/>
            <person name="Lucas S."/>
            <person name="Huang K."/>
            <person name="Goodstein D.M."/>
            <person name="Hawkins T."/>
            <person name="Plengvidhya V."/>
            <person name="Welker D."/>
            <person name="Hughes J."/>
            <person name="Goh Y."/>
            <person name="Benson A."/>
            <person name="Baldwin K."/>
            <person name="Lee J.-H."/>
            <person name="Diaz-Muniz I."/>
            <person name="Dosti B."/>
            <person name="Smeianov V."/>
            <person name="Wechter W."/>
            <person name="Barabote R."/>
            <person name="Lorca G."/>
            <person name="Altermann E."/>
            <person name="Barrangou R."/>
            <person name="Ganesan B."/>
            <person name="Xie Y."/>
            <person name="Rawsthorne H."/>
            <person name="Tamir D."/>
            <person name="Parker C."/>
            <person name="Breidt F."/>
            <person name="Broadbent J.R."/>
            <person name="Hutkins R."/>
            <person name="O'Sullivan D."/>
            <person name="Steele J."/>
            <person name="Unlu G."/>
            <person name="Saier M.H. Jr."/>
            <person name="Klaenhammer T."/>
            <person name="Richardson P."/>
            <person name="Kozyavkin S."/>
            <person name="Weimer B.C."/>
            <person name="Mills D.A."/>
        </authorList>
    </citation>
    <scope>NUCLEOTIDE SEQUENCE [LARGE SCALE GENOMIC DNA]</scope>
    <source>
        <strain>ATCC 25745 / CCUG 21536 / LMG 10740 / 183-1w</strain>
    </source>
</reference>
<keyword id="KW-0963">Cytoplasm</keyword>
<keyword id="KW-0275">Fatty acid biosynthesis</keyword>
<keyword id="KW-0276">Fatty acid metabolism</keyword>
<keyword id="KW-0444">Lipid biosynthesis</keyword>
<keyword id="KW-0443">Lipid metabolism</keyword>
<keyword id="KW-0460">Magnesium</keyword>
<keyword id="KW-0479">Metal-binding</keyword>
<keyword id="KW-0808">Transferase</keyword>
<name>ACPS_PEDPA</name>
<gene>
    <name evidence="1" type="primary">acpS</name>
    <name type="ordered locus">PEPE_1560</name>
</gene>
<proteinExistence type="inferred from homology"/>